<keyword id="KW-0001">2Fe-2S</keyword>
<keyword id="KW-0028">Amino-acid biosynthesis</keyword>
<keyword id="KW-0100">Branched-chain amino acid biosynthesis</keyword>
<keyword id="KW-0408">Iron</keyword>
<keyword id="KW-0411">Iron-sulfur</keyword>
<keyword id="KW-0456">Lyase</keyword>
<keyword id="KW-0460">Magnesium</keyword>
<keyword id="KW-0479">Metal-binding</keyword>
<evidence type="ECO:0000255" key="1">
    <source>
        <dbReference type="HAMAP-Rule" id="MF_00012"/>
    </source>
</evidence>
<gene>
    <name evidence="1" type="primary">ilvD</name>
    <name type="ordered locus">BCAH820_1891</name>
</gene>
<feature type="chain" id="PRO_1000190647" description="Dihydroxy-acid dehydratase">
    <location>
        <begin position="1"/>
        <end position="557"/>
    </location>
</feature>
<feature type="active site" description="Proton acceptor" evidence="1">
    <location>
        <position position="468"/>
    </location>
</feature>
<feature type="binding site" evidence="1">
    <location>
        <position position="78"/>
    </location>
    <ligand>
        <name>Mg(2+)</name>
        <dbReference type="ChEBI" id="CHEBI:18420"/>
    </ligand>
</feature>
<feature type="binding site" evidence="1">
    <location>
        <position position="119"/>
    </location>
    <ligand>
        <name>[2Fe-2S] cluster</name>
        <dbReference type="ChEBI" id="CHEBI:190135"/>
    </ligand>
</feature>
<feature type="binding site" evidence="1">
    <location>
        <position position="120"/>
    </location>
    <ligand>
        <name>Mg(2+)</name>
        <dbReference type="ChEBI" id="CHEBI:18420"/>
    </ligand>
</feature>
<feature type="binding site" description="via carbamate group" evidence="1">
    <location>
        <position position="121"/>
    </location>
    <ligand>
        <name>Mg(2+)</name>
        <dbReference type="ChEBI" id="CHEBI:18420"/>
    </ligand>
</feature>
<feature type="binding site" evidence="1">
    <location>
        <position position="192"/>
    </location>
    <ligand>
        <name>[2Fe-2S] cluster</name>
        <dbReference type="ChEBI" id="CHEBI:190135"/>
    </ligand>
</feature>
<feature type="binding site" evidence="1">
    <location>
        <position position="442"/>
    </location>
    <ligand>
        <name>Mg(2+)</name>
        <dbReference type="ChEBI" id="CHEBI:18420"/>
    </ligand>
</feature>
<feature type="modified residue" description="N6-carboxylysine" evidence="1">
    <location>
        <position position="121"/>
    </location>
</feature>
<name>ILVD_BACC0</name>
<proteinExistence type="inferred from homology"/>
<comment type="function">
    <text evidence="1">Functions in the biosynthesis of branched-chain amino acids. Catalyzes the dehydration of (2R,3R)-2,3-dihydroxy-3-methylpentanoate (2,3-dihydroxy-3-methylvalerate) into 2-oxo-3-methylpentanoate (2-oxo-3-methylvalerate) and of (2R)-2,3-dihydroxy-3-methylbutanoate (2,3-dihydroxyisovalerate) into 2-oxo-3-methylbutanoate (2-oxoisovalerate), the penultimate precursor to L-isoleucine and L-valine, respectively.</text>
</comment>
<comment type="catalytic activity">
    <reaction evidence="1">
        <text>(2R)-2,3-dihydroxy-3-methylbutanoate = 3-methyl-2-oxobutanoate + H2O</text>
        <dbReference type="Rhea" id="RHEA:24809"/>
        <dbReference type="ChEBI" id="CHEBI:11851"/>
        <dbReference type="ChEBI" id="CHEBI:15377"/>
        <dbReference type="ChEBI" id="CHEBI:49072"/>
        <dbReference type="EC" id="4.2.1.9"/>
    </reaction>
    <physiologicalReaction direction="left-to-right" evidence="1">
        <dbReference type="Rhea" id="RHEA:24810"/>
    </physiologicalReaction>
</comment>
<comment type="catalytic activity">
    <reaction evidence="1">
        <text>(2R,3R)-2,3-dihydroxy-3-methylpentanoate = (S)-3-methyl-2-oxopentanoate + H2O</text>
        <dbReference type="Rhea" id="RHEA:27694"/>
        <dbReference type="ChEBI" id="CHEBI:15377"/>
        <dbReference type="ChEBI" id="CHEBI:35146"/>
        <dbReference type="ChEBI" id="CHEBI:49258"/>
        <dbReference type="EC" id="4.2.1.9"/>
    </reaction>
    <physiologicalReaction direction="left-to-right" evidence="1">
        <dbReference type="Rhea" id="RHEA:27695"/>
    </physiologicalReaction>
</comment>
<comment type="cofactor">
    <cofactor evidence="1">
        <name>[2Fe-2S] cluster</name>
        <dbReference type="ChEBI" id="CHEBI:190135"/>
    </cofactor>
    <text evidence="1">Binds 1 [2Fe-2S] cluster per subunit. This cluster acts as a Lewis acid cofactor.</text>
</comment>
<comment type="cofactor">
    <cofactor evidence="1">
        <name>Mg(2+)</name>
        <dbReference type="ChEBI" id="CHEBI:18420"/>
    </cofactor>
</comment>
<comment type="pathway">
    <text evidence="1">Amino-acid biosynthesis; L-isoleucine biosynthesis; L-isoleucine from 2-oxobutanoate: step 3/4.</text>
</comment>
<comment type="pathway">
    <text evidence="1">Amino-acid biosynthesis; L-valine biosynthesis; L-valine from pyruvate: step 3/4.</text>
</comment>
<comment type="subunit">
    <text evidence="1">Homodimer.</text>
</comment>
<comment type="similarity">
    <text evidence="1">Belongs to the IlvD/Edd family.</text>
</comment>
<organism>
    <name type="scientific">Bacillus cereus (strain AH820)</name>
    <dbReference type="NCBI Taxonomy" id="405535"/>
    <lineage>
        <taxon>Bacteria</taxon>
        <taxon>Bacillati</taxon>
        <taxon>Bacillota</taxon>
        <taxon>Bacilli</taxon>
        <taxon>Bacillales</taxon>
        <taxon>Bacillaceae</taxon>
        <taxon>Bacillus</taxon>
        <taxon>Bacillus cereus group</taxon>
    </lineage>
</organism>
<protein>
    <recommendedName>
        <fullName evidence="1">Dihydroxy-acid dehydratase</fullName>
        <shortName evidence="1">DAD</shortName>
        <ecNumber evidence="1">4.2.1.9</ecNumber>
    </recommendedName>
</protein>
<reference key="1">
    <citation type="submission" date="2008-10" db="EMBL/GenBank/DDBJ databases">
        <title>Genome sequence of Bacillus cereus AH820.</title>
        <authorList>
            <person name="Dodson R.J."/>
            <person name="Durkin A.S."/>
            <person name="Rosovitz M.J."/>
            <person name="Rasko D.A."/>
            <person name="Hoffmaster A."/>
            <person name="Ravel J."/>
            <person name="Sutton G."/>
        </authorList>
    </citation>
    <scope>NUCLEOTIDE SEQUENCE [LARGE SCALE GENOMIC DNA]</scope>
    <source>
        <strain>AH820</strain>
    </source>
</reference>
<sequence>MRSDMIKKGFDKAPHRSLLKATGLKDEDFDKPFIAICNSFIEIIPGHKHLNEFGKLVKEAVRAAGMVPFEFNTIGVDDGIAMGHIGMRYSLPSREIIADSVETVVNAHWFDGMICIPNCDKITPGMMMAALRINIPTVFVSGGPMAAGKTSKGDVVDLSSVFEGVGAYQSGKISEEELKDIEDHGCPSCGSCSGMFTANSMNCLCEVLGLALPGNGSILAIDPRREELIKQAAEKLKILIERDIKPRDIVTEEAIDDAFALDMAMGGSTNTVLHTLALAQEAGLDYDMNRIDAVSRRVPHLCKVSPASNWHMEDIDRAGGISAILKEMSRKEGVLHLDRITATGQTLRENIAHAEIKDKEVIHSLENPHSEEGGLRILKGNLAKDGAVIKSGATEVIRFEGPCVIFNSQDEALAGIMLGKVKKGDVVIIRYEGPRGGPGMPEMLAPTSAIAGMGLGADVALLTDGRFSGASRGISVGHISPEAAAGGTIALLEQGDIVCIDVEERLLEVRVSDEELDKRKKEWKRPEPKVKTGWLGRYAQMVTSANTGAVLKIPNFD</sequence>
<accession>B7JJG8</accession>
<dbReference type="EC" id="4.2.1.9" evidence="1"/>
<dbReference type="EMBL" id="CP001283">
    <property type="protein sequence ID" value="ACK91429.1"/>
    <property type="molecule type" value="Genomic_DNA"/>
</dbReference>
<dbReference type="RefSeq" id="WP_001255796.1">
    <property type="nucleotide sequence ID" value="NC_011773.1"/>
</dbReference>
<dbReference type="SMR" id="B7JJG8"/>
<dbReference type="KEGG" id="bcu:BCAH820_1891"/>
<dbReference type="HOGENOM" id="CLU_014271_4_2_9"/>
<dbReference type="UniPathway" id="UPA00047">
    <property type="reaction ID" value="UER00057"/>
</dbReference>
<dbReference type="UniPathway" id="UPA00049">
    <property type="reaction ID" value="UER00061"/>
</dbReference>
<dbReference type="Proteomes" id="UP000001363">
    <property type="component" value="Chromosome"/>
</dbReference>
<dbReference type="GO" id="GO:0005829">
    <property type="term" value="C:cytosol"/>
    <property type="evidence" value="ECO:0007669"/>
    <property type="project" value="TreeGrafter"/>
</dbReference>
<dbReference type="GO" id="GO:0051537">
    <property type="term" value="F:2 iron, 2 sulfur cluster binding"/>
    <property type="evidence" value="ECO:0007669"/>
    <property type="project" value="UniProtKB-UniRule"/>
</dbReference>
<dbReference type="GO" id="GO:0004160">
    <property type="term" value="F:dihydroxy-acid dehydratase activity"/>
    <property type="evidence" value="ECO:0007669"/>
    <property type="project" value="UniProtKB-UniRule"/>
</dbReference>
<dbReference type="GO" id="GO:0000287">
    <property type="term" value="F:magnesium ion binding"/>
    <property type="evidence" value="ECO:0007669"/>
    <property type="project" value="UniProtKB-UniRule"/>
</dbReference>
<dbReference type="GO" id="GO:0009097">
    <property type="term" value="P:isoleucine biosynthetic process"/>
    <property type="evidence" value="ECO:0007669"/>
    <property type="project" value="UniProtKB-UniRule"/>
</dbReference>
<dbReference type="GO" id="GO:0009099">
    <property type="term" value="P:L-valine biosynthetic process"/>
    <property type="evidence" value="ECO:0007669"/>
    <property type="project" value="UniProtKB-UniRule"/>
</dbReference>
<dbReference type="FunFam" id="3.50.30.80:FF:000001">
    <property type="entry name" value="Dihydroxy-acid dehydratase"/>
    <property type="match status" value="1"/>
</dbReference>
<dbReference type="Gene3D" id="3.50.30.80">
    <property type="entry name" value="IlvD/EDD C-terminal domain-like"/>
    <property type="match status" value="1"/>
</dbReference>
<dbReference type="HAMAP" id="MF_00012">
    <property type="entry name" value="IlvD"/>
    <property type="match status" value="1"/>
</dbReference>
<dbReference type="InterPro" id="IPR042096">
    <property type="entry name" value="Dihydro-acid_dehy_C"/>
</dbReference>
<dbReference type="InterPro" id="IPR004404">
    <property type="entry name" value="DihydroxyA_deHydtase"/>
</dbReference>
<dbReference type="InterPro" id="IPR020558">
    <property type="entry name" value="DiOHA_6PGluconate_deHydtase_CS"/>
</dbReference>
<dbReference type="InterPro" id="IPR056740">
    <property type="entry name" value="ILV_EDD_C"/>
</dbReference>
<dbReference type="InterPro" id="IPR000581">
    <property type="entry name" value="ILV_EDD_N"/>
</dbReference>
<dbReference type="InterPro" id="IPR037237">
    <property type="entry name" value="IlvD/EDD_N"/>
</dbReference>
<dbReference type="NCBIfam" id="TIGR00110">
    <property type="entry name" value="ilvD"/>
    <property type="match status" value="1"/>
</dbReference>
<dbReference type="NCBIfam" id="NF002068">
    <property type="entry name" value="PRK00911.1"/>
    <property type="match status" value="1"/>
</dbReference>
<dbReference type="PANTHER" id="PTHR43661">
    <property type="entry name" value="D-XYLONATE DEHYDRATASE"/>
    <property type="match status" value="1"/>
</dbReference>
<dbReference type="PANTHER" id="PTHR43661:SF3">
    <property type="entry name" value="D-XYLONATE DEHYDRATASE YAGF-RELATED"/>
    <property type="match status" value="1"/>
</dbReference>
<dbReference type="Pfam" id="PF24877">
    <property type="entry name" value="ILV_EDD_C"/>
    <property type="match status" value="1"/>
</dbReference>
<dbReference type="Pfam" id="PF00920">
    <property type="entry name" value="ILVD_EDD_N"/>
    <property type="match status" value="1"/>
</dbReference>
<dbReference type="SUPFAM" id="SSF143975">
    <property type="entry name" value="IlvD/EDD N-terminal domain-like"/>
    <property type="match status" value="1"/>
</dbReference>
<dbReference type="SUPFAM" id="SSF52016">
    <property type="entry name" value="LeuD/IlvD-like"/>
    <property type="match status" value="1"/>
</dbReference>
<dbReference type="PROSITE" id="PS00886">
    <property type="entry name" value="ILVD_EDD_1"/>
    <property type="match status" value="1"/>
</dbReference>
<dbReference type="PROSITE" id="PS00887">
    <property type="entry name" value="ILVD_EDD_2"/>
    <property type="match status" value="1"/>
</dbReference>